<evidence type="ECO:0000250" key="1"/>
<evidence type="ECO:0000255" key="2"/>
<evidence type="ECO:0000269" key="3">
    <source>
    </source>
</evidence>
<evidence type="ECO:0000303" key="4">
    <source>
    </source>
</evidence>
<evidence type="ECO:0000305" key="5"/>
<sequence>MVLSLILQLSTLWPACRADFTPTAPLASYPQPWLGAHPAAVVTPGINVTLTCRAPQSAWRFALFKSGLVTPLLLRDVSVELAEFFLEEVTPAQGGSYHCRYRKTDWGPGVWSQPSNVLELLVTDQLPRPSLVALPGPVVAPGANVSLRCAGRIPGMSFALYRVGVATPLQYIDSVQPWADFLLIGTHTPGTYCCYYHTPSAPYVLSQRSQPLVISFEGSGSLDYTQGNLIRLGLAGMVLICLGIIVTCDWHSRSSAFDGLLPQQN</sequence>
<feature type="signal peptide" evidence="2">
    <location>
        <begin position="1"/>
        <end position="18"/>
    </location>
</feature>
<feature type="chain" id="PRO_0000310952" description="Osteoclast-associated immunoglobulin-like receptor">
    <location>
        <begin position="19"/>
        <end position="265"/>
    </location>
</feature>
<feature type="topological domain" description="Extracellular" evidence="2">
    <location>
        <begin position="19"/>
        <end position="231"/>
    </location>
</feature>
<feature type="transmembrane region" description="Helical" evidence="2">
    <location>
        <begin position="232"/>
        <end position="248"/>
    </location>
</feature>
<feature type="topological domain" description="Cytoplasmic" evidence="2">
    <location>
        <begin position="249"/>
        <end position="265"/>
    </location>
</feature>
<feature type="domain" description="Ig-like 1">
    <location>
        <begin position="22"/>
        <end position="115"/>
    </location>
</feature>
<feature type="domain" description="Ig-like 2">
    <location>
        <begin position="125"/>
        <end position="218"/>
    </location>
</feature>
<feature type="glycosylation site" description="N-linked (GlcNAc...) asparagine" evidence="2">
    <location>
        <position position="47"/>
    </location>
</feature>
<feature type="glycosylation site" description="N-linked (GlcNAc...) asparagine" evidence="2">
    <location>
        <position position="144"/>
    </location>
</feature>
<feature type="disulfide bond" evidence="1">
    <location>
        <begin position="52"/>
        <end position="99"/>
    </location>
</feature>
<feature type="splice variant" id="VSP_029356" description="In isoform 2." evidence="4">
    <original>L</original>
    <variation>LCELSLP</variation>
    <location>
        <position position="12"/>
    </location>
</feature>
<comment type="function">
    <text evidence="3">Regulator of osteoclastogenesis which plays an important bone-specific function in osteoclast differentiation.</text>
</comment>
<comment type="subcellular location">
    <subcellularLocation>
        <location evidence="5">Cell membrane</location>
        <topology evidence="5">Single-pass type I membrane protein</topology>
    </subcellularLocation>
</comment>
<comment type="alternative products">
    <event type="alternative splicing"/>
    <isoform>
        <id>Q8VBT3-1</id>
        <name>1</name>
        <name>OSCAR-M2</name>
        <sequence type="displayed"/>
    </isoform>
    <isoform>
        <id>Q8VBT3-2</id>
        <name>2</name>
        <name>OSCAR-M3</name>
        <sequence type="described" ref="VSP_029356"/>
    </isoform>
</comment>
<comment type="tissue specificity">
    <text evidence="3">Specifically expressed in preosteoclasts or mature osteoclasts.</text>
</comment>
<comment type="similarity">
    <text evidence="5">Belongs to the leukocyte receptor complex/polymeric immunoglobulin receptor (PIR/LRC) family.</text>
</comment>
<name>OSCAR_MOUSE</name>
<accession>Q8VBT3</accession>
<accession>Q8VHT9</accession>
<keyword id="KW-0025">Alternative splicing</keyword>
<keyword id="KW-1003">Cell membrane</keyword>
<keyword id="KW-1015">Disulfide bond</keyword>
<keyword id="KW-0325">Glycoprotein</keyword>
<keyword id="KW-0393">Immunoglobulin domain</keyword>
<keyword id="KW-0472">Membrane</keyword>
<keyword id="KW-0675">Receptor</keyword>
<keyword id="KW-1185">Reference proteome</keyword>
<keyword id="KW-0677">Repeat</keyword>
<keyword id="KW-0732">Signal</keyword>
<keyword id="KW-0812">Transmembrane</keyword>
<keyword id="KW-1133">Transmembrane helix</keyword>
<protein>
    <recommendedName>
        <fullName>Osteoclast-associated immunoglobulin-like receptor</fullName>
        <shortName>Osteoclast-associated receptor</shortName>
        <shortName>mOSCAR</shortName>
    </recommendedName>
    <alternativeName>
        <fullName>Ocl178</fullName>
    </alternativeName>
</protein>
<reference key="1">
    <citation type="journal article" date="2002" name="J. Exp. Med.">
        <title>A novel member of the leukocyte receptor complex regulates osteoclast differentiation.</title>
        <authorList>
            <person name="Kim N."/>
            <person name="Takami M."/>
            <person name="Rho J."/>
            <person name="Josien R."/>
            <person name="Choi Y."/>
        </authorList>
    </citation>
    <scope>NUCLEOTIDE SEQUENCE [MRNA] (ISOFORMS 1 AND 2)</scope>
    <scope>FUNCTION</scope>
    <scope>TISSUE SPECIFICITY</scope>
    <source>
        <strain>C57BL/6J</strain>
    </source>
</reference>
<organism>
    <name type="scientific">Mus musculus</name>
    <name type="common">Mouse</name>
    <dbReference type="NCBI Taxonomy" id="10090"/>
    <lineage>
        <taxon>Eukaryota</taxon>
        <taxon>Metazoa</taxon>
        <taxon>Chordata</taxon>
        <taxon>Craniata</taxon>
        <taxon>Vertebrata</taxon>
        <taxon>Euteleostomi</taxon>
        <taxon>Mammalia</taxon>
        <taxon>Eutheria</taxon>
        <taxon>Euarchontoglires</taxon>
        <taxon>Glires</taxon>
        <taxon>Rodentia</taxon>
        <taxon>Myomorpha</taxon>
        <taxon>Muroidea</taxon>
        <taxon>Muridae</taxon>
        <taxon>Murinae</taxon>
        <taxon>Mus</taxon>
        <taxon>Mus</taxon>
    </lineage>
</organism>
<dbReference type="EMBL" id="AF391159">
    <property type="protein sequence ID" value="AAL68492.1"/>
    <property type="molecule type" value="mRNA"/>
</dbReference>
<dbReference type="EMBL" id="AF391160">
    <property type="protein sequence ID" value="AAL68493.1"/>
    <property type="molecule type" value="mRNA"/>
</dbReference>
<dbReference type="EMBL" id="AF391161">
    <property type="protein sequence ID" value="AAL68494.1"/>
    <property type="molecule type" value="mRNA"/>
</dbReference>
<dbReference type="CCDS" id="CCDS20718.1">
    <molecule id="Q8VBT3-2"/>
</dbReference>
<dbReference type="CCDS" id="CCDS71872.1">
    <molecule id="Q8VBT3-1"/>
</dbReference>
<dbReference type="RefSeq" id="NP_001277306.1">
    <molecule id="Q8VBT3-1"/>
    <property type="nucleotide sequence ID" value="NM_001290377.1"/>
</dbReference>
<dbReference type="RefSeq" id="NP_783440.1">
    <molecule id="Q8VBT3-2"/>
    <property type="nucleotide sequence ID" value="NM_175632.3"/>
</dbReference>
<dbReference type="SMR" id="Q8VBT3"/>
<dbReference type="FunCoup" id="Q8VBT3">
    <property type="interactions" value="99"/>
</dbReference>
<dbReference type="STRING" id="10090.ENSMUSP00000041306"/>
<dbReference type="GlyCosmos" id="Q8VBT3">
    <property type="glycosylation" value="2 sites, No reported glycans"/>
</dbReference>
<dbReference type="GlyGen" id="Q8VBT3">
    <property type="glycosylation" value="3 sites"/>
</dbReference>
<dbReference type="PaxDb" id="10090-ENSMUSP00000041306"/>
<dbReference type="Antibodypedia" id="32787">
    <property type="antibodies" value="245 antibodies from 26 providers"/>
</dbReference>
<dbReference type="DNASU" id="232790"/>
<dbReference type="Ensembl" id="ENSMUST00000039507.15">
    <molecule id="Q8VBT3-2"/>
    <property type="protein sequence ID" value="ENSMUSP00000041306.8"/>
    <property type="gene ID" value="ENSMUSG00000054594.14"/>
</dbReference>
<dbReference type="Ensembl" id="ENSMUST00000108645.8">
    <molecule id="Q8VBT3-1"/>
    <property type="protein sequence ID" value="ENSMUSP00000104285.2"/>
    <property type="gene ID" value="ENSMUSG00000054594.14"/>
</dbReference>
<dbReference type="GeneID" id="232790"/>
<dbReference type="KEGG" id="mmu:232790"/>
<dbReference type="UCSC" id="uc009evb.2">
    <molecule id="Q8VBT3-2"/>
    <property type="organism name" value="mouse"/>
</dbReference>
<dbReference type="UCSC" id="uc009evc.1">
    <molecule id="Q8VBT3-1"/>
    <property type="organism name" value="mouse"/>
</dbReference>
<dbReference type="AGR" id="MGI:2179720"/>
<dbReference type="CTD" id="126014"/>
<dbReference type="MGI" id="MGI:2179720">
    <property type="gene designation" value="Oscar"/>
</dbReference>
<dbReference type="VEuPathDB" id="HostDB:ENSMUSG00000054594"/>
<dbReference type="eggNOG" id="ENOG502T2B6">
    <property type="taxonomic scope" value="Eukaryota"/>
</dbReference>
<dbReference type="GeneTree" id="ENSGT01130000278334"/>
<dbReference type="InParanoid" id="Q8VBT3"/>
<dbReference type="OMA" id="AQRWADF"/>
<dbReference type="OrthoDB" id="82569at9989"/>
<dbReference type="PhylomeDB" id="Q8VBT3"/>
<dbReference type="TreeFam" id="TF336644"/>
<dbReference type="Reactome" id="R-MMU-198933">
    <property type="pathway name" value="Immunoregulatory interactions between a Lymphoid and a non-Lymphoid cell"/>
</dbReference>
<dbReference type="Reactome" id="R-MMU-6798695">
    <property type="pathway name" value="Neutrophil degranulation"/>
</dbReference>
<dbReference type="BioGRID-ORCS" id="232790">
    <property type="hits" value="3 hits in 79 CRISPR screens"/>
</dbReference>
<dbReference type="PRO" id="PR:Q8VBT3"/>
<dbReference type="Proteomes" id="UP000000589">
    <property type="component" value="Chromosome 7"/>
</dbReference>
<dbReference type="RNAct" id="Q8VBT3">
    <property type="molecule type" value="protein"/>
</dbReference>
<dbReference type="Bgee" id="ENSMUSG00000054594">
    <property type="expression patterns" value="Expressed in blastoderm cell in morula and 31 other cell types or tissues"/>
</dbReference>
<dbReference type="ExpressionAtlas" id="Q8VBT3">
    <property type="expression patterns" value="baseline and differential"/>
</dbReference>
<dbReference type="GO" id="GO:0009986">
    <property type="term" value="C:cell surface"/>
    <property type="evidence" value="ECO:0000314"/>
    <property type="project" value="MGI"/>
</dbReference>
<dbReference type="GO" id="GO:0005886">
    <property type="term" value="C:plasma membrane"/>
    <property type="evidence" value="ECO:0007669"/>
    <property type="project" value="UniProtKB-SubCell"/>
</dbReference>
<dbReference type="GO" id="GO:0038064">
    <property type="term" value="F:collagen receptor activity"/>
    <property type="evidence" value="ECO:0000315"/>
    <property type="project" value="MGI"/>
</dbReference>
<dbReference type="GO" id="GO:0038094">
    <property type="term" value="P:Fc-gamma receptor signaling pathway"/>
    <property type="evidence" value="ECO:0000315"/>
    <property type="project" value="MGI"/>
</dbReference>
<dbReference type="GO" id="GO:0072674">
    <property type="term" value="P:multinuclear osteoclast differentiation"/>
    <property type="evidence" value="ECO:0000315"/>
    <property type="project" value="MGI"/>
</dbReference>
<dbReference type="GO" id="GO:0030316">
    <property type="term" value="P:osteoclast differentiation"/>
    <property type="evidence" value="ECO:0000314"/>
    <property type="project" value="MGI"/>
</dbReference>
<dbReference type="GO" id="GO:0045780">
    <property type="term" value="P:positive regulation of bone resorption"/>
    <property type="evidence" value="ECO:0000315"/>
    <property type="project" value="MGI"/>
</dbReference>
<dbReference type="FunFam" id="2.60.40.10:FF:000033">
    <property type="entry name" value="Killer cell immunoglobulin-like receptor"/>
    <property type="match status" value="1"/>
</dbReference>
<dbReference type="FunFam" id="2.60.40.10:FF:000049">
    <property type="entry name" value="Leukocyte immunoglobulin-like receptor subfamily B member 1"/>
    <property type="match status" value="1"/>
</dbReference>
<dbReference type="Gene3D" id="2.60.40.10">
    <property type="entry name" value="Immunoglobulins"/>
    <property type="match status" value="2"/>
</dbReference>
<dbReference type="InterPro" id="IPR036179">
    <property type="entry name" value="Ig-like_dom_sf"/>
</dbReference>
<dbReference type="InterPro" id="IPR013783">
    <property type="entry name" value="Ig-like_fold"/>
</dbReference>
<dbReference type="InterPro" id="IPR050412">
    <property type="entry name" value="Ig-like_Receptors_ImmuneReg"/>
</dbReference>
<dbReference type="PANTHER" id="PTHR11738">
    <property type="entry name" value="MHC CLASS I NK CELL RECEPTOR"/>
    <property type="match status" value="1"/>
</dbReference>
<dbReference type="PANTHER" id="PTHR11738:SF186">
    <property type="entry name" value="OSTEOCLAST-ASSOCIATED IMMUNOGLOBULIN-LIKE RECEPTOR"/>
    <property type="match status" value="1"/>
</dbReference>
<dbReference type="Pfam" id="PF13895">
    <property type="entry name" value="Ig_2"/>
    <property type="match status" value="1"/>
</dbReference>
<dbReference type="SUPFAM" id="SSF48726">
    <property type="entry name" value="Immunoglobulin"/>
    <property type="match status" value="2"/>
</dbReference>
<gene>
    <name type="primary">Oscar</name>
</gene>
<proteinExistence type="evidence at transcript level"/>